<feature type="chain" id="PRO_1000009759" description="dCTP deaminase, dUMP-forming">
    <location>
        <begin position="1"/>
        <end position="189"/>
    </location>
</feature>
<feature type="region of interest" description="Disordered" evidence="2">
    <location>
        <begin position="166"/>
        <end position="189"/>
    </location>
</feature>
<feature type="compositionally biased region" description="Polar residues" evidence="2">
    <location>
        <begin position="171"/>
        <end position="189"/>
    </location>
</feature>
<feature type="active site" description="Proton donor/acceptor" evidence="1">
    <location>
        <position position="129"/>
    </location>
</feature>
<feature type="binding site" evidence="1">
    <location>
        <begin position="101"/>
        <end position="106"/>
    </location>
    <ligand>
        <name>dCTP</name>
        <dbReference type="ChEBI" id="CHEBI:61481"/>
    </ligand>
</feature>
<feature type="binding site" evidence="1">
    <location>
        <position position="119"/>
    </location>
    <ligand>
        <name>dCTP</name>
        <dbReference type="ChEBI" id="CHEBI:61481"/>
    </ligand>
</feature>
<feature type="binding site" evidence="1">
    <location>
        <begin position="127"/>
        <end position="129"/>
    </location>
    <ligand>
        <name>dCTP</name>
        <dbReference type="ChEBI" id="CHEBI:61481"/>
    </ligand>
</feature>
<feature type="binding site" evidence="1">
    <location>
        <position position="148"/>
    </location>
    <ligand>
        <name>dCTP</name>
        <dbReference type="ChEBI" id="CHEBI:61481"/>
    </ligand>
</feature>
<feature type="binding site" evidence="1">
    <location>
        <position position="162"/>
    </location>
    <ligand>
        <name>dCTP</name>
        <dbReference type="ChEBI" id="CHEBI:61481"/>
    </ligand>
</feature>
<feature type="binding site" evidence="1">
    <location>
        <position position="174"/>
    </location>
    <ligand>
        <name>dCTP</name>
        <dbReference type="ChEBI" id="CHEBI:61481"/>
    </ligand>
</feature>
<feature type="site" description="Important for bifunctional activity" evidence="1">
    <location>
        <begin position="116"/>
        <end position="117"/>
    </location>
</feature>
<comment type="function">
    <text evidence="1">Bifunctional enzyme that catalyzes both the deamination of dCTP to dUTP and the hydrolysis of dUTP to dUMP without releasing the toxic dUTP intermediate.</text>
</comment>
<comment type="catalytic activity">
    <reaction evidence="1">
        <text>dCTP + 2 H2O = dUMP + NH4(+) + diphosphate</text>
        <dbReference type="Rhea" id="RHEA:19205"/>
        <dbReference type="ChEBI" id="CHEBI:15377"/>
        <dbReference type="ChEBI" id="CHEBI:28938"/>
        <dbReference type="ChEBI" id="CHEBI:33019"/>
        <dbReference type="ChEBI" id="CHEBI:61481"/>
        <dbReference type="ChEBI" id="CHEBI:246422"/>
        <dbReference type="EC" id="3.5.4.30"/>
    </reaction>
</comment>
<comment type="pathway">
    <text evidence="1">Pyrimidine metabolism; dUMP biosynthesis; dUMP from dCTP: step 1/1.</text>
</comment>
<comment type="subunit">
    <text evidence="1">Homotrimer.</text>
</comment>
<comment type="similarity">
    <text evidence="1">Belongs to the dCTP deaminase family.</text>
</comment>
<organism>
    <name type="scientific">Mycolicibacterium smegmatis (strain ATCC 700084 / mc(2)155)</name>
    <name type="common">Mycobacterium smegmatis</name>
    <dbReference type="NCBI Taxonomy" id="246196"/>
    <lineage>
        <taxon>Bacteria</taxon>
        <taxon>Bacillati</taxon>
        <taxon>Actinomycetota</taxon>
        <taxon>Actinomycetes</taxon>
        <taxon>Mycobacteriales</taxon>
        <taxon>Mycobacteriaceae</taxon>
        <taxon>Mycolicibacterium</taxon>
    </lineage>
</organism>
<proteinExistence type="evidence at protein level"/>
<dbReference type="EC" id="3.5.4.30" evidence="1"/>
<dbReference type="EMBL" id="CP000480">
    <property type="protein sequence ID" value="ABK71968.1"/>
    <property type="molecule type" value="Genomic_DNA"/>
</dbReference>
<dbReference type="EMBL" id="CP001663">
    <property type="protein sequence ID" value="AFP37141.1"/>
    <property type="molecule type" value="Genomic_DNA"/>
</dbReference>
<dbReference type="RefSeq" id="WP_011727114.1">
    <property type="nucleotide sequence ID" value="NZ_SIJM01000009.1"/>
</dbReference>
<dbReference type="RefSeq" id="YP_885086.1">
    <property type="nucleotide sequence ID" value="NC_008596.1"/>
</dbReference>
<dbReference type="SMR" id="A0QQ98"/>
<dbReference type="STRING" id="246196.MSMEG_0678"/>
<dbReference type="PaxDb" id="246196-MSMEI_0661"/>
<dbReference type="GeneID" id="93455590"/>
<dbReference type="KEGG" id="msb:LJ00_03365"/>
<dbReference type="KEGG" id="msg:MSMEI_0661"/>
<dbReference type="KEGG" id="msm:MSMEG_0678"/>
<dbReference type="PATRIC" id="fig|246196.19.peg.674"/>
<dbReference type="eggNOG" id="COG0717">
    <property type="taxonomic scope" value="Bacteria"/>
</dbReference>
<dbReference type="OrthoDB" id="9780956at2"/>
<dbReference type="UniPathway" id="UPA00610">
    <property type="reaction ID" value="UER00667"/>
</dbReference>
<dbReference type="Proteomes" id="UP000000757">
    <property type="component" value="Chromosome"/>
</dbReference>
<dbReference type="Proteomes" id="UP000006158">
    <property type="component" value="Chromosome"/>
</dbReference>
<dbReference type="GO" id="GO:0033973">
    <property type="term" value="F:dCTP deaminase (dUMP-forming) activity"/>
    <property type="evidence" value="ECO:0007669"/>
    <property type="project" value="UniProtKB-UniRule"/>
</dbReference>
<dbReference type="GO" id="GO:0008829">
    <property type="term" value="F:dCTP deaminase activity"/>
    <property type="evidence" value="ECO:0007669"/>
    <property type="project" value="InterPro"/>
</dbReference>
<dbReference type="GO" id="GO:0000166">
    <property type="term" value="F:nucleotide binding"/>
    <property type="evidence" value="ECO:0007669"/>
    <property type="project" value="UniProtKB-KW"/>
</dbReference>
<dbReference type="GO" id="GO:0006226">
    <property type="term" value="P:dUMP biosynthetic process"/>
    <property type="evidence" value="ECO:0007669"/>
    <property type="project" value="UniProtKB-UniRule"/>
</dbReference>
<dbReference type="GO" id="GO:0006229">
    <property type="term" value="P:dUTP biosynthetic process"/>
    <property type="evidence" value="ECO:0007669"/>
    <property type="project" value="InterPro"/>
</dbReference>
<dbReference type="GO" id="GO:0015949">
    <property type="term" value="P:nucleobase-containing small molecule interconversion"/>
    <property type="evidence" value="ECO:0007669"/>
    <property type="project" value="TreeGrafter"/>
</dbReference>
<dbReference type="CDD" id="cd07557">
    <property type="entry name" value="trimeric_dUTPase"/>
    <property type="match status" value="1"/>
</dbReference>
<dbReference type="FunFam" id="2.70.40.10:FF:000005">
    <property type="entry name" value="dCTP deaminase, dUMP-forming"/>
    <property type="match status" value="1"/>
</dbReference>
<dbReference type="Gene3D" id="2.70.40.10">
    <property type="match status" value="1"/>
</dbReference>
<dbReference type="HAMAP" id="MF_00146">
    <property type="entry name" value="dCTP_deaminase"/>
    <property type="match status" value="1"/>
</dbReference>
<dbReference type="InterPro" id="IPR011962">
    <property type="entry name" value="dCTP_deaminase"/>
</dbReference>
<dbReference type="InterPro" id="IPR036157">
    <property type="entry name" value="dUTPase-like_sf"/>
</dbReference>
<dbReference type="InterPro" id="IPR033704">
    <property type="entry name" value="dUTPase_trimeric"/>
</dbReference>
<dbReference type="NCBIfam" id="TIGR02274">
    <property type="entry name" value="dCTP_deam"/>
    <property type="match status" value="1"/>
</dbReference>
<dbReference type="PANTHER" id="PTHR42680">
    <property type="entry name" value="DCTP DEAMINASE"/>
    <property type="match status" value="1"/>
</dbReference>
<dbReference type="PANTHER" id="PTHR42680:SF3">
    <property type="entry name" value="DCTP DEAMINASE"/>
    <property type="match status" value="1"/>
</dbReference>
<dbReference type="Pfam" id="PF22769">
    <property type="entry name" value="DCD"/>
    <property type="match status" value="1"/>
</dbReference>
<dbReference type="SUPFAM" id="SSF51283">
    <property type="entry name" value="dUTPase-like"/>
    <property type="match status" value="1"/>
</dbReference>
<gene>
    <name evidence="1" type="primary">dcd</name>
    <name type="ordered locus">MSMEG_0678</name>
    <name type="ordered locus">MSMEI_0661</name>
</gene>
<sequence length="189" mass="20639">MLLSDRDIRAEIAAKRLALEPFDDALVQPSSIDVRLDRMFRVFNNTRYTHIDPAMQQDELTTLVEPAEGEPFVLHPGEFVLGSTLELCTLPDDLAGRLEGKSSLGRLGLLTHSTAGFIDPGFSGHITLELSNVANLPITLWPGMKIGQLCLLRLTSPAENPYGSAAVGSKYQGQRGPTPSRSHLNFIKS</sequence>
<accession>A0QQ98</accession>
<accession>I7G263</accession>
<name>DCDB_MYCS2</name>
<reference key="1">
    <citation type="submission" date="2006-10" db="EMBL/GenBank/DDBJ databases">
        <authorList>
            <person name="Fleischmann R.D."/>
            <person name="Dodson R.J."/>
            <person name="Haft D.H."/>
            <person name="Merkel J.S."/>
            <person name="Nelson W.C."/>
            <person name="Fraser C.M."/>
        </authorList>
    </citation>
    <scope>NUCLEOTIDE SEQUENCE [LARGE SCALE GENOMIC DNA]</scope>
    <source>
        <strain>ATCC 700084 / mc(2)155</strain>
    </source>
</reference>
<reference key="2">
    <citation type="journal article" date="2007" name="Genome Biol.">
        <title>Interrupted coding sequences in Mycobacterium smegmatis: authentic mutations or sequencing errors?</title>
        <authorList>
            <person name="Deshayes C."/>
            <person name="Perrodou E."/>
            <person name="Gallien S."/>
            <person name="Euphrasie D."/>
            <person name="Schaeffer C."/>
            <person name="Van-Dorsselaer A."/>
            <person name="Poch O."/>
            <person name="Lecompte O."/>
            <person name="Reyrat J.-M."/>
        </authorList>
    </citation>
    <scope>NUCLEOTIDE SEQUENCE [LARGE SCALE GENOMIC DNA]</scope>
    <source>
        <strain>ATCC 700084 / mc(2)155</strain>
    </source>
</reference>
<reference key="3">
    <citation type="journal article" date="2009" name="Genome Res.">
        <title>Ortho-proteogenomics: multiple proteomes investigation through orthology and a new MS-based protocol.</title>
        <authorList>
            <person name="Gallien S."/>
            <person name="Perrodou E."/>
            <person name="Carapito C."/>
            <person name="Deshayes C."/>
            <person name="Reyrat J.-M."/>
            <person name="Van Dorsselaer A."/>
            <person name="Poch O."/>
            <person name="Schaeffer C."/>
            <person name="Lecompte O."/>
        </authorList>
    </citation>
    <scope>NUCLEOTIDE SEQUENCE [LARGE SCALE GENOMIC DNA]</scope>
    <scope>IDENTIFICATION BY MASS SPECTROMETRY [LARGE SCALE ANALYSIS]</scope>
    <scope>IDENTIFICATION OF N-TERMINUS</scope>
    <source>
        <strain>ATCC 700084 / mc(2)155</strain>
    </source>
</reference>
<keyword id="KW-0378">Hydrolase</keyword>
<keyword id="KW-0546">Nucleotide metabolism</keyword>
<keyword id="KW-0547">Nucleotide-binding</keyword>
<keyword id="KW-1185">Reference proteome</keyword>
<evidence type="ECO:0000255" key="1">
    <source>
        <dbReference type="HAMAP-Rule" id="MF_00146"/>
    </source>
</evidence>
<evidence type="ECO:0000256" key="2">
    <source>
        <dbReference type="SAM" id="MobiDB-lite"/>
    </source>
</evidence>
<protein>
    <recommendedName>
        <fullName evidence="1">dCTP deaminase, dUMP-forming</fullName>
        <ecNumber evidence="1">3.5.4.30</ecNumber>
    </recommendedName>
    <alternativeName>
        <fullName evidence="1">Bifunctional dCTP deaminase:dUTPase</fullName>
    </alternativeName>
    <alternativeName>
        <fullName evidence="1">DCD-DUT</fullName>
    </alternativeName>
</protein>